<accession>Q9N6A4</accession>
<proteinExistence type="evidence at transcript level"/>
<sequence length="69" mass="7695">VLIIAVLFLTACQLTTAETYSRGRQKHRARRSTDKNSKWTRECTHSGGACNSHDQCCNAFCDTATRTCV</sequence>
<organism>
    <name type="scientific">Conus ebraeus</name>
    <name type="common">Hebrew cone</name>
    <dbReference type="NCBI Taxonomy" id="89425"/>
    <lineage>
        <taxon>Eukaryota</taxon>
        <taxon>Metazoa</taxon>
        <taxon>Spiralia</taxon>
        <taxon>Lophotrochozoa</taxon>
        <taxon>Mollusca</taxon>
        <taxon>Gastropoda</taxon>
        <taxon>Caenogastropoda</taxon>
        <taxon>Neogastropoda</taxon>
        <taxon>Conoidea</taxon>
        <taxon>Conidae</taxon>
        <taxon>Conus</taxon>
        <taxon>Virroconus</taxon>
    </lineage>
</organism>
<keyword id="KW-1015">Disulfide bond</keyword>
<keyword id="KW-0960">Knottin</keyword>
<keyword id="KW-0964">Secreted</keyword>
<keyword id="KW-0732">Signal</keyword>
<keyword id="KW-0800">Toxin</keyword>
<protein>
    <recommendedName>
        <fullName>Conotoxin Eb6.1</fullName>
    </recommendedName>
</protein>
<name>O161_CONEA</name>
<feature type="signal peptide" evidence="2">
    <location>
        <begin position="1" status="less than"/>
        <end position="17"/>
    </location>
</feature>
<feature type="propeptide" id="PRO_0000414632" evidence="1">
    <location>
        <begin position="18"/>
        <end position="41"/>
    </location>
</feature>
<feature type="peptide" id="PRO_0000414633" description="Conotoxin Eb6.1">
    <location>
        <begin position="42"/>
        <end position="69"/>
    </location>
</feature>
<feature type="disulfide bond" evidence="1">
    <location>
        <begin position="43"/>
        <end position="57"/>
    </location>
</feature>
<feature type="disulfide bond" evidence="1">
    <location>
        <begin position="50"/>
        <end position="61"/>
    </location>
</feature>
<feature type="disulfide bond" evidence="1">
    <location>
        <begin position="56"/>
        <end position="68"/>
    </location>
</feature>
<feature type="non-terminal residue">
    <location>
        <position position="1"/>
    </location>
</feature>
<comment type="subcellular location">
    <subcellularLocation>
        <location evidence="1">Secreted</location>
    </subcellularLocation>
</comment>
<comment type="tissue specificity">
    <text>Expressed by the venom duct.</text>
</comment>
<comment type="domain">
    <text evidence="1">The presence of a 'disulfide through disulfide knot' structurally defines this protein as a knottin.</text>
</comment>
<comment type="domain">
    <text>The cysteine framework is VI/VII (C-C-CC-C-C).</text>
</comment>
<comment type="miscellaneous">
    <text>This precursor corresponds to allele E1a. Has not been merged with other alleles since they may differ due to geographic variation (see strains in PubMed:19606224).</text>
</comment>
<comment type="similarity">
    <text evidence="3">Belongs to the conotoxin O1 superfamily.</text>
</comment>
<dbReference type="EMBL" id="AF174268">
    <property type="protein sequence ID" value="AAF89932.1"/>
    <property type="molecule type" value="mRNA"/>
</dbReference>
<dbReference type="EMBL" id="AF174271">
    <property type="protein sequence ID" value="AAF89935.1"/>
    <property type="molecule type" value="mRNA"/>
</dbReference>
<dbReference type="EMBL" id="AF174273">
    <property type="protein sequence ID" value="AAF89937.1"/>
    <property type="molecule type" value="mRNA"/>
</dbReference>
<dbReference type="EMBL" id="AF174274">
    <property type="protein sequence ID" value="AAF89938.1"/>
    <property type="molecule type" value="mRNA"/>
</dbReference>
<dbReference type="EMBL" id="AF174285">
    <property type="protein sequence ID" value="AAF89949.1"/>
    <property type="molecule type" value="mRNA"/>
</dbReference>
<dbReference type="EMBL" id="FJ804530">
    <property type="protein sequence ID" value="ACU56805.1"/>
    <property type="molecule type" value="mRNA"/>
</dbReference>
<dbReference type="ConoServer" id="1242">
    <property type="toxin name" value="Eb6.1 precursor"/>
</dbReference>
<dbReference type="GO" id="GO:0005576">
    <property type="term" value="C:extracellular region"/>
    <property type="evidence" value="ECO:0007669"/>
    <property type="project" value="UniProtKB-SubCell"/>
</dbReference>
<dbReference type="GO" id="GO:0008200">
    <property type="term" value="F:ion channel inhibitor activity"/>
    <property type="evidence" value="ECO:0007669"/>
    <property type="project" value="InterPro"/>
</dbReference>
<dbReference type="GO" id="GO:0090729">
    <property type="term" value="F:toxin activity"/>
    <property type="evidence" value="ECO:0007669"/>
    <property type="project" value="UniProtKB-KW"/>
</dbReference>
<dbReference type="InterPro" id="IPR004214">
    <property type="entry name" value="Conotoxin"/>
</dbReference>
<dbReference type="Pfam" id="PF02950">
    <property type="entry name" value="Conotoxin"/>
    <property type="match status" value="1"/>
</dbReference>
<gene>
    <name type="primary">E1</name>
</gene>
<evidence type="ECO:0000250" key="1"/>
<evidence type="ECO:0000255" key="2"/>
<evidence type="ECO:0000305" key="3"/>
<reference key="1">
    <citation type="journal article" date="2009" name="PLoS ONE">
        <title>Geographic variation in venom allelic composition and diets of the widespread predatory marine gastropod Conus ebraeus.</title>
        <authorList>
            <person name="Duda T.F. Jr."/>
            <person name="Chang D."/>
            <person name="Lewis B.D."/>
            <person name="Lee T."/>
        </authorList>
    </citation>
    <scope>NUCLEOTIDE SEQUENCE [MRNA]</scope>
    <source>
        <strain>Guam</strain>
        <strain>Hawaii</strain>
        <strain>Okinawa</strain>
        <tissue>Venom duct</tissue>
    </source>
</reference>
<reference key="2">
    <citation type="journal article" date="2000" name="Mol. Biol. Evol.">
        <title>Evolutionary diversification of multigene families: allelic selection of toxins in predatory cone snails.</title>
        <authorList>
            <person name="Duda T.F. Jr."/>
            <person name="Palumbi S.R."/>
        </authorList>
    </citation>
    <scope>NUCLEOTIDE SEQUENCE [MRNA]</scope>
</reference>